<accession>A5VIA9</accession>
<sequence length="166" mass="18139">MSEAAIAKKAEIVKQTTDMLNAAQSAIVVDYRGLTVAEVTDLRKQLRDAGIQMSVIKNKILDRAVEGTDYEDLRSTFVGPTAVAFSDEDPIAPAKILKKFADDHDALEIKGGFIEKSVKTLDEINEYANMPGREELLSMLASALQDPMRKIARAVKAIADKEDEAA</sequence>
<evidence type="ECO:0000255" key="1">
    <source>
        <dbReference type="HAMAP-Rule" id="MF_00362"/>
    </source>
</evidence>
<evidence type="ECO:0000305" key="2"/>
<keyword id="KW-1185">Reference proteome</keyword>
<keyword id="KW-0687">Ribonucleoprotein</keyword>
<keyword id="KW-0689">Ribosomal protein</keyword>
<keyword id="KW-0694">RNA-binding</keyword>
<keyword id="KW-0699">rRNA-binding</keyword>
<name>RL10_LIMRD</name>
<organism>
    <name type="scientific">Limosilactobacillus reuteri (strain DSM 20016)</name>
    <name type="common">Lactobacillus reuteri</name>
    <dbReference type="NCBI Taxonomy" id="557436"/>
    <lineage>
        <taxon>Bacteria</taxon>
        <taxon>Bacillati</taxon>
        <taxon>Bacillota</taxon>
        <taxon>Bacilli</taxon>
        <taxon>Lactobacillales</taxon>
        <taxon>Lactobacillaceae</taxon>
        <taxon>Limosilactobacillus</taxon>
    </lineage>
</organism>
<reference key="1">
    <citation type="journal article" date="2011" name="PLoS Genet.">
        <title>The evolution of host specialization in the vertebrate gut symbiont Lactobacillus reuteri.</title>
        <authorList>
            <person name="Frese S.A."/>
            <person name="Benson A.K."/>
            <person name="Tannock G.W."/>
            <person name="Loach D.M."/>
            <person name="Kim J."/>
            <person name="Zhang M."/>
            <person name="Oh P.L."/>
            <person name="Heng N.C."/>
            <person name="Patil P.B."/>
            <person name="Juge N."/>
            <person name="Mackenzie D.A."/>
            <person name="Pearson B.M."/>
            <person name="Lapidus A."/>
            <person name="Dalin E."/>
            <person name="Tice H."/>
            <person name="Goltsman E."/>
            <person name="Land M."/>
            <person name="Hauser L."/>
            <person name="Ivanova N."/>
            <person name="Kyrpides N.C."/>
            <person name="Walter J."/>
        </authorList>
    </citation>
    <scope>NUCLEOTIDE SEQUENCE [LARGE SCALE GENOMIC DNA]</scope>
    <source>
        <strain>DSM 20016</strain>
    </source>
</reference>
<dbReference type="EMBL" id="CP000705">
    <property type="protein sequence ID" value="ABQ82583.1"/>
    <property type="molecule type" value="Genomic_DNA"/>
</dbReference>
<dbReference type="RefSeq" id="WP_003666309.1">
    <property type="nucleotide sequence ID" value="NZ_AZDD01000008.1"/>
</dbReference>
<dbReference type="SMR" id="A5VIA9"/>
<dbReference type="STRING" id="557436.Lreu_0313"/>
<dbReference type="GeneID" id="77190117"/>
<dbReference type="KEGG" id="lre:Lreu_0313"/>
<dbReference type="PATRIC" id="fig|557436.17.peg.1898"/>
<dbReference type="eggNOG" id="COG0244">
    <property type="taxonomic scope" value="Bacteria"/>
</dbReference>
<dbReference type="HOGENOM" id="CLU_092227_2_0_9"/>
<dbReference type="Proteomes" id="UP000001991">
    <property type="component" value="Chromosome"/>
</dbReference>
<dbReference type="GO" id="GO:0015934">
    <property type="term" value="C:large ribosomal subunit"/>
    <property type="evidence" value="ECO:0007669"/>
    <property type="project" value="InterPro"/>
</dbReference>
<dbReference type="GO" id="GO:0070180">
    <property type="term" value="F:large ribosomal subunit rRNA binding"/>
    <property type="evidence" value="ECO:0007669"/>
    <property type="project" value="UniProtKB-UniRule"/>
</dbReference>
<dbReference type="GO" id="GO:0003735">
    <property type="term" value="F:structural constituent of ribosome"/>
    <property type="evidence" value="ECO:0007669"/>
    <property type="project" value="InterPro"/>
</dbReference>
<dbReference type="GO" id="GO:0006412">
    <property type="term" value="P:translation"/>
    <property type="evidence" value="ECO:0007669"/>
    <property type="project" value="UniProtKB-UniRule"/>
</dbReference>
<dbReference type="CDD" id="cd05797">
    <property type="entry name" value="Ribosomal_L10"/>
    <property type="match status" value="1"/>
</dbReference>
<dbReference type="Gene3D" id="3.30.70.1730">
    <property type="match status" value="1"/>
</dbReference>
<dbReference type="HAMAP" id="MF_00362">
    <property type="entry name" value="Ribosomal_uL10"/>
    <property type="match status" value="1"/>
</dbReference>
<dbReference type="InterPro" id="IPR001790">
    <property type="entry name" value="Ribosomal_uL10"/>
</dbReference>
<dbReference type="InterPro" id="IPR043141">
    <property type="entry name" value="Ribosomal_uL10-like_sf"/>
</dbReference>
<dbReference type="InterPro" id="IPR022973">
    <property type="entry name" value="Ribosomal_uL10_bac"/>
</dbReference>
<dbReference type="InterPro" id="IPR047865">
    <property type="entry name" value="Ribosomal_uL10_bac_type"/>
</dbReference>
<dbReference type="InterPro" id="IPR002363">
    <property type="entry name" value="Ribosomal_uL10_CS_bac"/>
</dbReference>
<dbReference type="NCBIfam" id="NF000955">
    <property type="entry name" value="PRK00099.1-1"/>
    <property type="match status" value="1"/>
</dbReference>
<dbReference type="PANTHER" id="PTHR11560">
    <property type="entry name" value="39S RIBOSOMAL PROTEIN L10, MITOCHONDRIAL"/>
    <property type="match status" value="1"/>
</dbReference>
<dbReference type="Pfam" id="PF00466">
    <property type="entry name" value="Ribosomal_L10"/>
    <property type="match status" value="1"/>
</dbReference>
<dbReference type="SUPFAM" id="SSF160369">
    <property type="entry name" value="Ribosomal protein L10-like"/>
    <property type="match status" value="1"/>
</dbReference>
<dbReference type="PROSITE" id="PS01109">
    <property type="entry name" value="RIBOSOMAL_L10"/>
    <property type="match status" value="1"/>
</dbReference>
<gene>
    <name evidence="1" type="primary">rplJ</name>
    <name type="ordered locus">Lreu_0313</name>
</gene>
<proteinExistence type="inferred from homology"/>
<protein>
    <recommendedName>
        <fullName evidence="1">Large ribosomal subunit protein uL10</fullName>
    </recommendedName>
    <alternativeName>
        <fullName evidence="2">50S ribosomal protein L10</fullName>
    </alternativeName>
</protein>
<feature type="chain" id="PRO_1000059889" description="Large ribosomal subunit protein uL10">
    <location>
        <begin position="1"/>
        <end position="166"/>
    </location>
</feature>
<comment type="function">
    <text evidence="1">Forms part of the ribosomal stalk, playing a central role in the interaction of the ribosome with GTP-bound translation factors.</text>
</comment>
<comment type="subunit">
    <text evidence="1">Part of the ribosomal stalk of the 50S ribosomal subunit. The N-terminus interacts with L11 and the large rRNA to form the base of the stalk. The C-terminus forms an elongated spine to which L12 dimers bind in a sequential fashion forming a multimeric L10(L12)X complex.</text>
</comment>
<comment type="similarity">
    <text evidence="1">Belongs to the universal ribosomal protein uL10 family.</text>
</comment>